<proteinExistence type="evidence at protein level"/>
<gene>
    <name type="primary">bgn13.1</name>
</gene>
<dbReference type="EC" id="3.2.1.39"/>
<dbReference type="EMBL" id="X84085">
    <property type="protein sequence ID" value="CAA58889.1"/>
    <property type="molecule type" value="mRNA"/>
</dbReference>
<dbReference type="SMR" id="P53626"/>
<dbReference type="CAZy" id="GH55">
    <property type="family name" value="Glycoside Hydrolase Family 55"/>
</dbReference>
<dbReference type="GO" id="GO:0005576">
    <property type="term" value="C:extracellular region"/>
    <property type="evidence" value="ECO:0007669"/>
    <property type="project" value="UniProtKB-SubCell"/>
</dbReference>
<dbReference type="GO" id="GO:0042973">
    <property type="term" value="F:glucan endo-1,3-beta-D-glucosidase activity"/>
    <property type="evidence" value="ECO:0007669"/>
    <property type="project" value="UniProtKB-EC"/>
</dbReference>
<dbReference type="GO" id="GO:0004650">
    <property type="term" value="F:polygalacturonase activity"/>
    <property type="evidence" value="ECO:0007669"/>
    <property type="project" value="InterPro"/>
</dbReference>
<dbReference type="CDD" id="cd23668">
    <property type="entry name" value="GH55_beta13glucanase-like"/>
    <property type="match status" value="1"/>
</dbReference>
<dbReference type="Gene3D" id="2.160.20.10">
    <property type="entry name" value="Single-stranded right-handed beta-helix, Pectin lyase-like"/>
    <property type="match status" value="2"/>
</dbReference>
<dbReference type="InterPro" id="IPR012334">
    <property type="entry name" value="Pectin_lyas_fold"/>
</dbReference>
<dbReference type="InterPro" id="IPR011050">
    <property type="entry name" value="Pectin_lyase_fold/virulence"/>
</dbReference>
<dbReference type="InterPro" id="IPR039279">
    <property type="entry name" value="QRT3-like"/>
</dbReference>
<dbReference type="InterPro" id="IPR024535">
    <property type="entry name" value="RHGA/B-epi-like_pectate_lyase"/>
</dbReference>
<dbReference type="PANTHER" id="PTHR33928:SF2">
    <property type="entry name" value="PECTATE LYASE SUPERFAMILY PROTEIN DOMAIN-CONTAINING PROTEIN-RELATED"/>
    <property type="match status" value="1"/>
</dbReference>
<dbReference type="PANTHER" id="PTHR33928">
    <property type="entry name" value="POLYGALACTURONASE QRT3"/>
    <property type="match status" value="1"/>
</dbReference>
<dbReference type="Pfam" id="PF12708">
    <property type="entry name" value="Pect-lyase_RHGA_epim"/>
    <property type="match status" value="2"/>
</dbReference>
<dbReference type="SUPFAM" id="SSF51126">
    <property type="entry name" value="Pectin lyase-like"/>
    <property type="match status" value="2"/>
</dbReference>
<keyword id="KW-0165">Cleavage on pair of basic residues</keyword>
<keyword id="KW-0903">Direct protein sequencing</keyword>
<keyword id="KW-0326">Glycosidase</keyword>
<keyword id="KW-0378">Hydrolase</keyword>
<keyword id="KW-0964">Secreted</keyword>
<keyword id="KW-0732">Signal</keyword>
<feature type="signal peptide" evidence="1">
    <location>
        <begin position="1"/>
        <end position="16"/>
    </location>
</feature>
<feature type="propeptide" id="PRO_0000012227">
    <location>
        <begin position="17"/>
        <end position="33"/>
    </location>
</feature>
<feature type="chain" id="PRO_0000012228" description="Glucan endo-1,3-beta-glucosidase BGN13.1">
    <location>
        <begin position="34"/>
        <end position="762"/>
    </location>
</feature>
<feature type="sequence conflict" description="In Ref. 1; AA sequence." evidence="2" ref="1">
    <original>P</original>
    <variation>F</variation>
    <location>
        <position position="40"/>
    </location>
</feature>
<feature type="sequence conflict" description="In Ref. 1; AA sequence." evidence="2" ref="1">
    <original>R</original>
    <variation>P</variation>
    <location>
        <position position="759"/>
    </location>
</feature>
<comment type="function">
    <text>Involved in mycoparasitism, hydrolyzes yeast and fungal cell walls. Classified as a small-oligosaccharide-producing type based its the end products: glucose, laminaribiose or laminaritetraose.</text>
</comment>
<comment type="catalytic activity">
    <reaction>
        <text>Hydrolysis of (1-&gt;3)-beta-D-glucosidic linkages in (1-&gt;3)-beta-D-glucans.</text>
        <dbReference type="EC" id="3.2.1.39"/>
    </reaction>
</comment>
<comment type="activity regulation">
    <text>Inhibited by glucose.</text>
</comment>
<comment type="biophysicochemical properties">
    <temperatureDependence>
        <text>Optimum temperature is 40 degrees Celsius. Inactive at 55 degrees Celsius.</text>
    </temperatureDependence>
</comment>
<comment type="subcellular location">
    <subcellularLocation>
        <location>Secreted</location>
    </subcellularLocation>
</comment>
<comment type="domain">
    <text>The C-terminal cysteine-rich region may function as a fungal cell wall binding domain.</text>
</comment>
<comment type="PTM">
    <text>Does not seem to be glycosylated.</text>
</comment>
<comment type="similarity">
    <text evidence="2">Belongs to the glycosyl hydrolase 55 family.</text>
</comment>
<name>E13B_TRIHA</name>
<sequence length="762" mass="81247">MLKLTALVALLLGAASATPTPSPPASDEGITKRATSFYYPNMDHVNAPRGFAPDLDGDFNYPIYQTVNAGDGNALQNAITTDGKGGSRHPQWFASQPRVVYIPPGTYTISKTLRFNTDTILMGDPTNPPIIKAAAGFSGDQTLISAQDPSTNEKGELSFAVAIKNVVLDTTAIPGGNSFTALWWGVAQAAHLQNVRITMSSSSGGNGHTGIRMGRGSTLGLADVRVERGQNGIWIDGHQQASFHNIYFFQNTIGMLISSGNTFSIFSSTFDTCGTAFPTLAGSPWIALIDAKSINSGVTFTTNQFPSFMIENLTKDNGTPVVVVRGSTLVGASSHVNTYSYGNTVGRNPTYGDVTSSNTRPSALAPGGRYPYVAPPTYGDLPISSFLNVKDPAQNGNRQVKGDNTINEADTLNAILELAASQNKVAYFPFGKYRVDSTLFIPKGSRIVGEAWATITGNGNFFKNENSPQPVVSVGRAGDVGIAQLQDLRVTTNDVLPGAILVQFNMAGNNPGDVALWNSLVTVGGTRGAQALANACTNNSNECKGAFIGIHVAKGSSPYIQNVWELGLRDHIAENFSGGTSHRRERWNFGPIRRNATCLYPIGSGHWWLYQLNLHNAANVVVSLLQAETNYHQGANTQQIPPAPWVANVGTWGDPDFSWCNGGDKRCRMGPANFINGGSNIYTYASAAWAFFSGPGQGCAQFECQQTIHWIASTPSNLQAFGLCSKDSVNTLRLGDGTFINTQNGYTGGWTPGGGDVARYTT</sequence>
<organism>
    <name type="scientific">Trichoderma harzianum</name>
    <name type="common">Hypocrea lixii</name>
    <dbReference type="NCBI Taxonomy" id="5544"/>
    <lineage>
        <taxon>Eukaryota</taxon>
        <taxon>Fungi</taxon>
        <taxon>Dikarya</taxon>
        <taxon>Ascomycota</taxon>
        <taxon>Pezizomycotina</taxon>
        <taxon>Sordariomycetes</taxon>
        <taxon>Hypocreomycetidae</taxon>
        <taxon>Hypocreales</taxon>
        <taxon>Hypocreaceae</taxon>
        <taxon>Trichoderma</taxon>
    </lineage>
</organism>
<accession>P53626</accession>
<evidence type="ECO:0000255" key="1"/>
<evidence type="ECO:0000305" key="2"/>
<reference key="1">
    <citation type="journal article" date="1995" name="J. Bacteriol.">
        <title>A novel endo-beta-1,3-glucanase, BGN13.1, involved in the mycoparasitism of Trichoderma harzianum.</title>
        <authorList>
            <person name="de la Cruz J."/>
            <person name="Pintor-Toro J.A."/>
            <person name="Benitez T."/>
            <person name="Llobell A."/>
            <person name="Romero L.C."/>
        </authorList>
    </citation>
    <scope>NUCLEOTIDE SEQUENCE [MRNA]</scope>
    <scope>PARTIAL PROTEIN SEQUENCE</scope>
    <source>
        <strain>ATCC 48131 / CBS 354.33 / CECT 2413 / VTT D-80150</strain>
    </source>
</reference>
<protein>
    <recommendedName>
        <fullName>Glucan endo-1,3-beta-glucosidase BGN13.1</fullName>
        <ecNumber>3.2.1.39</ecNumber>
    </recommendedName>
    <alternativeName>
        <fullName>(1-&gt;3)-beta-glucan endohydrolase BGN13.1</fullName>
        <shortName>(1-&gt;3)-beta-glucanase BGN13.1</shortName>
    </alternativeName>
    <alternativeName>
        <fullName>Basic beta-1,3-endoglucanase BGN13.1</fullName>
    </alternativeName>
</protein>